<keyword id="KW-0665">Pyrimidine biosynthesis</keyword>
<keyword id="KW-1185">Reference proteome</keyword>
<keyword id="KW-0808">Transferase</keyword>
<organism>
    <name type="scientific">Nitrosococcus oceani (strain ATCC 19707 / BCRC 17464 / JCM 30415 / NCIMB 11848 / C-107)</name>
    <dbReference type="NCBI Taxonomy" id="323261"/>
    <lineage>
        <taxon>Bacteria</taxon>
        <taxon>Pseudomonadati</taxon>
        <taxon>Pseudomonadota</taxon>
        <taxon>Gammaproteobacteria</taxon>
        <taxon>Chromatiales</taxon>
        <taxon>Chromatiaceae</taxon>
        <taxon>Nitrosococcus</taxon>
    </lineage>
</organism>
<accession>Q3JE55</accession>
<gene>
    <name evidence="1" type="primary">pyrB</name>
    <name type="ordered locus">Noc_0365</name>
</gene>
<feature type="chain" id="PRO_0000321124" description="Aspartate carbamoyltransferase catalytic subunit">
    <location>
        <begin position="1"/>
        <end position="324"/>
    </location>
</feature>
<feature type="binding site" evidence="1">
    <location>
        <position position="65"/>
    </location>
    <ligand>
        <name>carbamoyl phosphate</name>
        <dbReference type="ChEBI" id="CHEBI:58228"/>
    </ligand>
</feature>
<feature type="binding site" evidence="1">
    <location>
        <position position="66"/>
    </location>
    <ligand>
        <name>carbamoyl phosphate</name>
        <dbReference type="ChEBI" id="CHEBI:58228"/>
    </ligand>
</feature>
<feature type="binding site" evidence="1">
    <location>
        <position position="93"/>
    </location>
    <ligand>
        <name>L-aspartate</name>
        <dbReference type="ChEBI" id="CHEBI:29991"/>
    </ligand>
</feature>
<feature type="binding site" evidence="1">
    <location>
        <position position="115"/>
    </location>
    <ligand>
        <name>carbamoyl phosphate</name>
        <dbReference type="ChEBI" id="CHEBI:58228"/>
    </ligand>
</feature>
<feature type="binding site" evidence="1">
    <location>
        <position position="145"/>
    </location>
    <ligand>
        <name>carbamoyl phosphate</name>
        <dbReference type="ChEBI" id="CHEBI:58228"/>
    </ligand>
</feature>
<feature type="binding site" evidence="1">
    <location>
        <position position="148"/>
    </location>
    <ligand>
        <name>carbamoyl phosphate</name>
        <dbReference type="ChEBI" id="CHEBI:58228"/>
    </ligand>
</feature>
<feature type="binding site" evidence="1">
    <location>
        <position position="178"/>
    </location>
    <ligand>
        <name>L-aspartate</name>
        <dbReference type="ChEBI" id="CHEBI:29991"/>
    </ligand>
</feature>
<feature type="binding site" evidence="1">
    <location>
        <position position="233"/>
    </location>
    <ligand>
        <name>L-aspartate</name>
        <dbReference type="ChEBI" id="CHEBI:29991"/>
    </ligand>
</feature>
<feature type="binding site" evidence="1">
    <location>
        <position position="274"/>
    </location>
    <ligand>
        <name>carbamoyl phosphate</name>
        <dbReference type="ChEBI" id="CHEBI:58228"/>
    </ligand>
</feature>
<feature type="binding site" evidence="1">
    <location>
        <position position="275"/>
    </location>
    <ligand>
        <name>carbamoyl phosphate</name>
        <dbReference type="ChEBI" id="CHEBI:58228"/>
    </ligand>
</feature>
<proteinExistence type="inferred from homology"/>
<name>PYRB_NITOC</name>
<sequence>MSNLQLDQNGQLRHFLSIQGLNRELLTRILDTAESFSTIGAQHVKKVPLLRGKTIVNLFFENSTRTLSTFELAAKRLSADVMNLNVRTSSTQKGESLLDTLRSLEAMHCDMFVVRHSDSGAAYFIARHVPSHVSVINAGDGCHSHPSQAMLDMLTIRRHKGSFPNLRVAIVGDILHSRVARSEIHALATLGTGEIRVIAPRTLLPRNVESLGVHIFHDMRAGLKGVDVVITLRLQRERMEGARLPSEREYFQLYGLTEEKLALARPEAIVMHPGPINRGIEIESAVADGPHSVILEQVSHGIAIRMAVMAMTMQIPVPEAKEAR</sequence>
<dbReference type="EC" id="2.1.3.2" evidence="1"/>
<dbReference type="EMBL" id="CP000127">
    <property type="protein sequence ID" value="ABA56891.1"/>
    <property type="molecule type" value="Genomic_DNA"/>
</dbReference>
<dbReference type="RefSeq" id="WP_002813207.1">
    <property type="nucleotide sequence ID" value="NC_007484.1"/>
</dbReference>
<dbReference type="SMR" id="Q3JE55"/>
<dbReference type="STRING" id="323261.Noc_0365"/>
<dbReference type="KEGG" id="noc:Noc_0365"/>
<dbReference type="eggNOG" id="COG0540">
    <property type="taxonomic scope" value="Bacteria"/>
</dbReference>
<dbReference type="HOGENOM" id="CLU_043846_2_0_6"/>
<dbReference type="InParanoid" id="Q3JE55"/>
<dbReference type="UniPathway" id="UPA00070">
    <property type="reaction ID" value="UER00116"/>
</dbReference>
<dbReference type="Proteomes" id="UP000006838">
    <property type="component" value="Chromosome"/>
</dbReference>
<dbReference type="GO" id="GO:0005829">
    <property type="term" value="C:cytosol"/>
    <property type="evidence" value="ECO:0007669"/>
    <property type="project" value="TreeGrafter"/>
</dbReference>
<dbReference type="GO" id="GO:0016597">
    <property type="term" value="F:amino acid binding"/>
    <property type="evidence" value="ECO:0007669"/>
    <property type="project" value="InterPro"/>
</dbReference>
<dbReference type="GO" id="GO:0004070">
    <property type="term" value="F:aspartate carbamoyltransferase activity"/>
    <property type="evidence" value="ECO:0007669"/>
    <property type="project" value="UniProtKB-UniRule"/>
</dbReference>
<dbReference type="GO" id="GO:0006207">
    <property type="term" value="P:'de novo' pyrimidine nucleobase biosynthetic process"/>
    <property type="evidence" value="ECO:0007669"/>
    <property type="project" value="InterPro"/>
</dbReference>
<dbReference type="GO" id="GO:0044205">
    <property type="term" value="P:'de novo' UMP biosynthetic process"/>
    <property type="evidence" value="ECO:0007669"/>
    <property type="project" value="UniProtKB-UniRule"/>
</dbReference>
<dbReference type="GO" id="GO:0006520">
    <property type="term" value="P:amino acid metabolic process"/>
    <property type="evidence" value="ECO:0007669"/>
    <property type="project" value="InterPro"/>
</dbReference>
<dbReference type="FunFam" id="3.40.50.1370:FF:000006">
    <property type="entry name" value="Aspartate carbamoyltransferase"/>
    <property type="match status" value="1"/>
</dbReference>
<dbReference type="FunFam" id="3.40.50.1370:FF:000007">
    <property type="entry name" value="Aspartate carbamoyltransferase"/>
    <property type="match status" value="1"/>
</dbReference>
<dbReference type="Gene3D" id="3.40.50.1370">
    <property type="entry name" value="Aspartate/ornithine carbamoyltransferase"/>
    <property type="match status" value="2"/>
</dbReference>
<dbReference type="HAMAP" id="MF_00001">
    <property type="entry name" value="Asp_carb_tr"/>
    <property type="match status" value="1"/>
</dbReference>
<dbReference type="InterPro" id="IPR006132">
    <property type="entry name" value="Asp/Orn_carbamoyltranf_P-bd"/>
</dbReference>
<dbReference type="InterPro" id="IPR006130">
    <property type="entry name" value="Asp/Orn_carbamoylTrfase"/>
</dbReference>
<dbReference type="InterPro" id="IPR036901">
    <property type="entry name" value="Asp/Orn_carbamoylTrfase_sf"/>
</dbReference>
<dbReference type="InterPro" id="IPR002082">
    <property type="entry name" value="Asp_carbamoyltransf"/>
</dbReference>
<dbReference type="InterPro" id="IPR006131">
    <property type="entry name" value="Asp_carbamoyltransf_Asp/Orn-bd"/>
</dbReference>
<dbReference type="NCBIfam" id="TIGR00670">
    <property type="entry name" value="asp_carb_tr"/>
    <property type="match status" value="1"/>
</dbReference>
<dbReference type="NCBIfam" id="NF002032">
    <property type="entry name" value="PRK00856.1"/>
    <property type="match status" value="1"/>
</dbReference>
<dbReference type="PANTHER" id="PTHR45753:SF6">
    <property type="entry name" value="ASPARTATE CARBAMOYLTRANSFERASE"/>
    <property type="match status" value="1"/>
</dbReference>
<dbReference type="PANTHER" id="PTHR45753">
    <property type="entry name" value="ORNITHINE CARBAMOYLTRANSFERASE, MITOCHONDRIAL"/>
    <property type="match status" value="1"/>
</dbReference>
<dbReference type="Pfam" id="PF00185">
    <property type="entry name" value="OTCace"/>
    <property type="match status" value="1"/>
</dbReference>
<dbReference type="Pfam" id="PF02729">
    <property type="entry name" value="OTCace_N"/>
    <property type="match status" value="1"/>
</dbReference>
<dbReference type="PRINTS" id="PR00100">
    <property type="entry name" value="AOTCASE"/>
</dbReference>
<dbReference type="PRINTS" id="PR00101">
    <property type="entry name" value="ATCASE"/>
</dbReference>
<dbReference type="SUPFAM" id="SSF53671">
    <property type="entry name" value="Aspartate/ornithine carbamoyltransferase"/>
    <property type="match status" value="1"/>
</dbReference>
<dbReference type="PROSITE" id="PS00097">
    <property type="entry name" value="CARBAMOYLTRANSFERASE"/>
    <property type="match status" value="1"/>
</dbReference>
<comment type="function">
    <text evidence="1">Catalyzes the condensation of carbamoyl phosphate and aspartate to form carbamoyl aspartate and inorganic phosphate, the committed step in the de novo pyrimidine nucleotide biosynthesis pathway.</text>
</comment>
<comment type="catalytic activity">
    <reaction evidence="1">
        <text>carbamoyl phosphate + L-aspartate = N-carbamoyl-L-aspartate + phosphate + H(+)</text>
        <dbReference type="Rhea" id="RHEA:20013"/>
        <dbReference type="ChEBI" id="CHEBI:15378"/>
        <dbReference type="ChEBI" id="CHEBI:29991"/>
        <dbReference type="ChEBI" id="CHEBI:32814"/>
        <dbReference type="ChEBI" id="CHEBI:43474"/>
        <dbReference type="ChEBI" id="CHEBI:58228"/>
        <dbReference type="EC" id="2.1.3.2"/>
    </reaction>
</comment>
<comment type="pathway">
    <text evidence="1">Pyrimidine metabolism; UMP biosynthesis via de novo pathway; (S)-dihydroorotate from bicarbonate: step 2/3.</text>
</comment>
<comment type="subunit">
    <text evidence="1">Heterododecamer (2C3:3R2) of six catalytic PyrB chains organized as two trimers (C3), and six regulatory PyrI chains organized as three dimers (R2).</text>
</comment>
<comment type="similarity">
    <text evidence="1">Belongs to the aspartate/ornithine carbamoyltransferase superfamily. ATCase family.</text>
</comment>
<protein>
    <recommendedName>
        <fullName evidence="1">Aspartate carbamoyltransferase catalytic subunit</fullName>
        <ecNumber evidence="1">2.1.3.2</ecNumber>
    </recommendedName>
    <alternativeName>
        <fullName evidence="1">Aspartate transcarbamylase</fullName>
        <shortName evidence="1">ATCase</shortName>
    </alternativeName>
</protein>
<evidence type="ECO:0000255" key="1">
    <source>
        <dbReference type="HAMAP-Rule" id="MF_00001"/>
    </source>
</evidence>
<reference key="1">
    <citation type="journal article" date="2006" name="Appl. Environ. Microbiol.">
        <title>Complete genome sequence of the marine, chemolithoautotrophic, ammonia-oxidizing bacterium Nitrosococcus oceani ATCC 19707.</title>
        <authorList>
            <person name="Klotz M.G."/>
            <person name="Arp D.J."/>
            <person name="Chain P.S.G."/>
            <person name="El-Sheikh A.F."/>
            <person name="Hauser L.J."/>
            <person name="Hommes N.G."/>
            <person name="Larimer F.W."/>
            <person name="Malfatti S.A."/>
            <person name="Norton J.M."/>
            <person name="Poret-Peterson A.T."/>
            <person name="Vergez L.M."/>
            <person name="Ward B.B."/>
        </authorList>
    </citation>
    <scope>NUCLEOTIDE SEQUENCE [LARGE SCALE GENOMIC DNA]</scope>
    <source>
        <strain>ATCC 19707 / BCRC 17464 / JCM 30415 / NCIMB 11848 / C-107</strain>
    </source>
</reference>